<feature type="chain" id="PRO_0000314600" description="UDP-glucose 4-epimerase">
    <location>
        <begin position="1"/>
        <end position="341"/>
    </location>
</feature>
<dbReference type="EC" id="5.1.3.2"/>
<dbReference type="EMBL" id="CP000849">
    <property type="protein sequence ID" value="ABV79267.1"/>
    <property type="molecule type" value="Genomic_DNA"/>
</dbReference>
<dbReference type="RefSeq" id="WP_012151938.1">
    <property type="nucleotide sequence ID" value="NC_009883.1"/>
</dbReference>
<dbReference type="SMR" id="A8GWP0"/>
<dbReference type="KEGG" id="rbo:A1I_04640"/>
<dbReference type="HOGENOM" id="CLU_013560_4_1_5"/>
<dbReference type="GO" id="GO:0003978">
    <property type="term" value="F:UDP-glucose 4-epimerase activity"/>
    <property type="evidence" value="ECO:0007669"/>
    <property type="project" value="UniProtKB-EC"/>
</dbReference>
<dbReference type="GO" id="GO:0009103">
    <property type="term" value="P:lipopolysaccharide biosynthetic process"/>
    <property type="evidence" value="ECO:0007669"/>
    <property type="project" value="UniProtKB-KW"/>
</dbReference>
<dbReference type="CDD" id="cd05237">
    <property type="entry name" value="UDP_invert_4-6DH_SDR_e"/>
    <property type="match status" value="1"/>
</dbReference>
<dbReference type="Gene3D" id="3.40.50.720">
    <property type="entry name" value="NAD(P)-binding Rossmann-like Domain"/>
    <property type="match status" value="1"/>
</dbReference>
<dbReference type="InterPro" id="IPR013692">
    <property type="entry name" value="CapD_C"/>
</dbReference>
<dbReference type="InterPro" id="IPR036291">
    <property type="entry name" value="NAD(P)-bd_dom_sf"/>
</dbReference>
<dbReference type="InterPro" id="IPR003869">
    <property type="entry name" value="Polysac_CapD-like"/>
</dbReference>
<dbReference type="InterPro" id="IPR051203">
    <property type="entry name" value="Polysaccharide_Synthase-Rel"/>
</dbReference>
<dbReference type="PANTHER" id="PTHR43318">
    <property type="entry name" value="UDP-N-ACETYLGLUCOSAMINE 4,6-DEHYDRATASE"/>
    <property type="match status" value="1"/>
</dbReference>
<dbReference type="PANTHER" id="PTHR43318:SF2">
    <property type="entry name" value="UDP-N-ACETYLGLUCOSAMINE 4,6-DEHYDRATASE (INVERTING)"/>
    <property type="match status" value="1"/>
</dbReference>
<dbReference type="Pfam" id="PF08485">
    <property type="entry name" value="Polysacc_syn_2C"/>
    <property type="match status" value="1"/>
</dbReference>
<dbReference type="Pfam" id="PF02719">
    <property type="entry name" value="Polysacc_synt_2"/>
    <property type="match status" value="1"/>
</dbReference>
<dbReference type="SUPFAM" id="SSF51735">
    <property type="entry name" value="NAD(P)-binding Rossmann-fold domains"/>
    <property type="match status" value="1"/>
</dbReference>
<reference key="1">
    <citation type="submission" date="2007-09" db="EMBL/GenBank/DDBJ databases">
        <title>Complete genome sequencing of Rickettsia bellii.</title>
        <authorList>
            <person name="Madan A."/>
            <person name="Lee H."/>
            <person name="Madan A."/>
            <person name="Yoon J.-G."/>
            <person name="Ryu G.-Y."/>
            <person name="Dasch G."/>
            <person name="Ereemeva M."/>
        </authorList>
    </citation>
    <scope>NUCLEOTIDE SEQUENCE [LARGE SCALE GENOMIC DNA]</scope>
    <source>
        <strain>OSU 85-389</strain>
    </source>
</reference>
<name>CAPD_RICB8</name>
<proteinExistence type="inferred from homology"/>
<comment type="function">
    <text evidence="1">Epimerizes UDP-galactose to UDP-glucose.</text>
</comment>
<comment type="catalytic activity">
    <reaction>
        <text>UDP-alpha-D-glucose = UDP-alpha-D-galactose</text>
        <dbReference type="Rhea" id="RHEA:22168"/>
        <dbReference type="ChEBI" id="CHEBI:58885"/>
        <dbReference type="ChEBI" id="CHEBI:66914"/>
        <dbReference type="EC" id="5.1.3.2"/>
    </reaction>
</comment>
<comment type="similarity">
    <text evidence="2">Belongs to the polysaccharide synthase family.</text>
</comment>
<evidence type="ECO:0000250" key="1"/>
<evidence type="ECO:0000305" key="2"/>
<protein>
    <recommendedName>
        <fullName>UDP-glucose 4-epimerase</fullName>
        <ecNumber>5.1.3.2</ecNumber>
    </recommendedName>
    <alternativeName>
        <fullName>Galactowaldenase</fullName>
    </alternativeName>
    <alternativeName>
        <fullName>UDP-galactose 4-epimerase</fullName>
    </alternativeName>
</protein>
<keyword id="KW-0413">Isomerase</keyword>
<keyword id="KW-0448">Lipopolysaccharide biosynthesis</keyword>
<sequence>MFVDKTLLITGGTGSFGNAVLSRFLKNDIIKDIKEIRIFSRDEKKQEDMRIALNNPKIKFYIGDVRNYNSIDDAMKDVDYVFHAAALKQVPTCEFYPMEAINTNILGAENVLRAATINKVAKVIVLSTDKAVYPINAMGLSKALMEKLAIAKARMNVRDKTVFCVTRYGNVMASRGSVIPLFINQIKQNKDLTITEPSMTRFLMSLVDSVDLVLYAFEYGHQGDIFVQKSPASTIEVLAKALQGIFNSKNKIRFIGTRHGEKHYESLVSSEEMAKAEDLGNYYRIPMDGRDLNYAKYFVEGEKKIALLEDYTSHNTKRLNLEEVKELLLNLDYVQEELKNA</sequence>
<gene>
    <name type="primary">capD</name>
    <name type="ordered locus">A1I_04640</name>
</gene>
<organism>
    <name type="scientific">Rickettsia bellii (strain OSU 85-389)</name>
    <dbReference type="NCBI Taxonomy" id="391896"/>
    <lineage>
        <taxon>Bacteria</taxon>
        <taxon>Pseudomonadati</taxon>
        <taxon>Pseudomonadota</taxon>
        <taxon>Alphaproteobacteria</taxon>
        <taxon>Rickettsiales</taxon>
        <taxon>Rickettsiaceae</taxon>
        <taxon>Rickettsieae</taxon>
        <taxon>Rickettsia</taxon>
        <taxon>belli group</taxon>
    </lineage>
</organism>
<accession>A8GWP0</accession>